<proteinExistence type="inferred from homology"/>
<protein>
    <recommendedName>
        <fullName evidence="1">Glucose-6-phosphate isomerase</fullName>
        <shortName evidence="1">GPI</shortName>
        <ecNumber evidence="1">5.3.1.9</ecNumber>
    </recommendedName>
    <alternativeName>
        <fullName evidence="1">Phosphoglucose isomerase</fullName>
        <shortName evidence="1">PGI</shortName>
    </alternativeName>
    <alternativeName>
        <fullName evidence="1">Phosphohexose isomerase</fullName>
        <shortName evidence="1">PHI</shortName>
    </alternativeName>
</protein>
<comment type="function">
    <text evidence="1">Catalyzes the reversible isomerization of glucose-6-phosphate to fructose-6-phosphate.</text>
</comment>
<comment type="catalytic activity">
    <reaction evidence="1">
        <text>alpha-D-glucose 6-phosphate = beta-D-fructose 6-phosphate</text>
        <dbReference type="Rhea" id="RHEA:11816"/>
        <dbReference type="ChEBI" id="CHEBI:57634"/>
        <dbReference type="ChEBI" id="CHEBI:58225"/>
        <dbReference type="EC" id="5.3.1.9"/>
    </reaction>
</comment>
<comment type="pathway">
    <text evidence="1">Carbohydrate biosynthesis; gluconeogenesis.</text>
</comment>
<comment type="pathway">
    <text evidence="1">Carbohydrate degradation; glycolysis; D-glyceraldehyde 3-phosphate and glycerone phosphate from D-glucose: step 2/4.</text>
</comment>
<comment type="subcellular location">
    <subcellularLocation>
        <location evidence="1">Cytoplasm</location>
    </subcellularLocation>
</comment>
<comment type="similarity">
    <text evidence="1 2">Belongs to the GPI family.</text>
</comment>
<gene>
    <name evidence="1" type="primary">pgi</name>
    <name type="ordered locus">MYCGA6360</name>
    <name type="ORF">MGA_0457</name>
</gene>
<name>G6PI_MYCGA</name>
<evidence type="ECO:0000255" key="1">
    <source>
        <dbReference type="HAMAP-Rule" id="MF_00473"/>
    </source>
</evidence>
<evidence type="ECO:0000305" key="2"/>
<accession>Q9KX58</accession>
<keyword id="KW-0963">Cytoplasm</keyword>
<keyword id="KW-0312">Gluconeogenesis</keyword>
<keyword id="KW-0324">Glycolysis</keyword>
<keyword id="KW-0413">Isomerase</keyword>
<keyword id="KW-1185">Reference proteome</keyword>
<reference key="1">
    <citation type="submission" date="2000-02" db="EMBL/GenBank/DDBJ databases">
        <authorList>
            <person name="Skamrov A.V."/>
            <person name="Feoktistova E.S."/>
            <person name="Gol'dman M.A."/>
            <person name="Bibilashvili R.S."/>
        </authorList>
    </citation>
    <scope>NUCLEOTIDE SEQUENCE [GENOMIC DNA]</scope>
    <source>
        <strain>A5969Var.B</strain>
    </source>
</reference>
<reference key="2">
    <citation type="journal article" date="2003" name="Microbiology">
        <title>The complete genome sequence of the avian pathogen Mycoplasma gallisepticum strain R(low).</title>
        <authorList>
            <person name="Papazisi L."/>
            <person name="Gorton T.S."/>
            <person name="Kutish G."/>
            <person name="Markham P.F."/>
            <person name="Browning G.F."/>
            <person name="Nguyen D.K."/>
            <person name="Swartzell S."/>
            <person name="Madan A."/>
            <person name="Mahairas G."/>
            <person name="Geary S.J."/>
        </authorList>
    </citation>
    <scope>NUCLEOTIDE SEQUENCE [LARGE SCALE GENOMIC DNA]</scope>
    <source>
        <strain>R(low / passage 15 / clone 2)</strain>
    </source>
</reference>
<dbReference type="EC" id="5.3.1.9" evidence="1"/>
<dbReference type="EMBL" id="L35043">
    <property type="protein sequence ID" value="AAF36765.1"/>
    <property type="molecule type" value="Genomic_DNA"/>
</dbReference>
<dbReference type="EMBL" id="AE015450">
    <property type="protein sequence ID" value="AAP56986.2"/>
    <property type="molecule type" value="Genomic_DNA"/>
</dbReference>
<dbReference type="RefSeq" id="WP_011113896.1">
    <property type="nucleotide sequence ID" value="NC_004829.2"/>
</dbReference>
<dbReference type="SMR" id="Q9KX58"/>
<dbReference type="KEGG" id="mga:MGA_0457"/>
<dbReference type="PATRIC" id="fig|233150.7.peg.713"/>
<dbReference type="HOGENOM" id="CLU_037303_0_1_14"/>
<dbReference type="OrthoDB" id="140919at2"/>
<dbReference type="UniPathway" id="UPA00109">
    <property type="reaction ID" value="UER00181"/>
</dbReference>
<dbReference type="UniPathway" id="UPA00138"/>
<dbReference type="Proteomes" id="UP000001418">
    <property type="component" value="Chromosome"/>
</dbReference>
<dbReference type="GO" id="GO:0005829">
    <property type="term" value="C:cytosol"/>
    <property type="evidence" value="ECO:0007669"/>
    <property type="project" value="TreeGrafter"/>
</dbReference>
<dbReference type="GO" id="GO:0097367">
    <property type="term" value="F:carbohydrate derivative binding"/>
    <property type="evidence" value="ECO:0007669"/>
    <property type="project" value="InterPro"/>
</dbReference>
<dbReference type="GO" id="GO:0004347">
    <property type="term" value="F:glucose-6-phosphate isomerase activity"/>
    <property type="evidence" value="ECO:0007669"/>
    <property type="project" value="UniProtKB-UniRule"/>
</dbReference>
<dbReference type="GO" id="GO:0048029">
    <property type="term" value="F:monosaccharide binding"/>
    <property type="evidence" value="ECO:0007669"/>
    <property type="project" value="TreeGrafter"/>
</dbReference>
<dbReference type="GO" id="GO:0006094">
    <property type="term" value="P:gluconeogenesis"/>
    <property type="evidence" value="ECO:0007669"/>
    <property type="project" value="UniProtKB-UniRule"/>
</dbReference>
<dbReference type="GO" id="GO:0051156">
    <property type="term" value="P:glucose 6-phosphate metabolic process"/>
    <property type="evidence" value="ECO:0007669"/>
    <property type="project" value="TreeGrafter"/>
</dbReference>
<dbReference type="GO" id="GO:0006096">
    <property type="term" value="P:glycolytic process"/>
    <property type="evidence" value="ECO:0007669"/>
    <property type="project" value="UniProtKB-UniRule"/>
</dbReference>
<dbReference type="CDD" id="cd05015">
    <property type="entry name" value="SIS_PGI_1"/>
    <property type="match status" value="1"/>
</dbReference>
<dbReference type="FunFam" id="3.40.50.10490:FF:000016">
    <property type="entry name" value="Glucose-6-phosphate isomerase"/>
    <property type="match status" value="1"/>
</dbReference>
<dbReference type="Gene3D" id="3.40.50.10490">
    <property type="entry name" value="Glucose-6-phosphate isomerase like protein, domain 1"/>
    <property type="match status" value="2"/>
</dbReference>
<dbReference type="HAMAP" id="MF_00473">
    <property type="entry name" value="G6P_isomerase"/>
    <property type="match status" value="1"/>
</dbReference>
<dbReference type="InterPro" id="IPR001672">
    <property type="entry name" value="G6P_Isomerase"/>
</dbReference>
<dbReference type="InterPro" id="IPR018189">
    <property type="entry name" value="Phosphoglucose_isomerase_CS"/>
</dbReference>
<dbReference type="InterPro" id="IPR046348">
    <property type="entry name" value="SIS_dom_sf"/>
</dbReference>
<dbReference type="InterPro" id="IPR035476">
    <property type="entry name" value="SIS_PGI_1"/>
</dbReference>
<dbReference type="NCBIfam" id="NF010697">
    <property type="entry name" value="PRK14097.1"/>
    <property type="match status" value="1"/>
</dbReference>
<dbReference type="PANTHER" id="PTHR11469">
    <property type="entry name" value="GLUCOSE-6-PHOSPHATE ISOMERASE"/>
    <property type="match status" value="1"/>
</dbReference>
<dbReference type="PANTHER" id="PTHR11469:SF1">
    <property type="entry name" value="GLUCOSE-6-PHOSPHATE ISOMERASE"/>
    <property type="match status" value="1"/>
</dbReference>
<dbReference type="Pfam" id="PF00342">
    <property type="entry name" value="PGI"/>
    <property type="match status" value="1"/>
</dbReference>
<dbReference type="PRINTS" id="PR00662">
    <property type="entry name" value="G6PISOMERASE"/>
</dbReference>
<dbReference type="SUPFAM" id="SSF53697">
    <property type="entry name" value="SIS domain"/>
    <property type="match status" value="1"/>
</dbReference>
<dbReference type="PROSITE" id="PS00765">
    <property type="entry name" value="P_GLUCOSE_ISOMERASE_1"/>
    <property type="match status" value="1"/>
</dbReference>
<dbReference type="PROSITE" id="PS00174">
    <property type="entry name" value="P_GLUCOSE_ISOMERASE_2"/>
    <property type="match status" value="1"/>
</dbReference>
<dbReference type="PROSITE" id="PS51463">
    <property type="entry name" value="P_GLUCOSE_ISOMERASE_3"/>
    <property type="match status" value="1"/>
</dbReference>
<organism>
    <name type="scientific">Mycoplasmoides gallisepticum (strain R(low / passage 15 / clone 2))</name>
    <name type="common">Mycoplasma gallisepticum</name>
    <dbReference type="NCBI Taxonomy" id="710127"/>
    <lineage>
        <taxon>Bacteria</taxon>
        <taxon>Bacillati</taxon>
        <taxon>Mycoplasmatota</taxon>
        <taxon>Mycoplasmoidales</taxon>
        <taxon>Mycoplasmoidaceae</taxon>
        <taxon>Mycoplasmoides</taxon>
    </lineage>
</organism>
<feature type="chain" id="PRO_0000180678" description="Glucose-6-phosphate isomerase">
    <location>
        <begin position="1"/>
        <end position="426"/>
    </location>
</feature>
<feature type="active site" description="Proton donor" evidence="1">
    <location>
        <position position="282"/>
    </location>
</feature>
<feature type="active site" evidence="1">
    <location>
        <position position="303"/>
    </location>
</feature>
<feature type="active site" evidence="1">
    <location>
        <position position="419"/>
    </location>
</feature>
<feature type="sequence conflict" description="In Ref. 1; AAF36765." evidence="2" ref="1">
    <original>T</original>
    <variation>A</variation>
    <location>
        <position position="65"/>
    </location>
</feature>
<feature type="sequence conflict" description="In Ref. 1; AAF36765." evidence="2" ref="1">
    <original>I</original>
    <variation>V</variation>
    <location>
        <position position="119"/>
    </location>
</feature>
<feature type="sequence conflict" description="In Ref. 1; AAF36765." evidence="2" ref="1">
    <original>V</original>
    <variation>I</variation>
    <location>
        <position position="123"/>
    </location>
</feature>
<feature type="sequence conflict" description="In Ref. 1; AAF36765." evidence="2" ref="1">
    <original>N</original>
    <variation>D</variation>
    <location>
        <position position="417"/>
    </location>
</feature>
<feature type="sequence conflict" description="In Ref. 1; AAF36765." evidence="2" ref="1">
    <original>L</original>
    <variation>LKE</variation>
    <location>
        <position position="426"/>
    </location>
</feature>
<sequence length="426" mass="48484">MIKLTFNLIKGLDYKKLDKNYQAKLDEIFSQLKNKKTPSANMLGWIDYVDQDHTKIYKSIDNKITEWDKLKVTDVVVIGIGGSFTGIKAILDVVAYLPSEQKRQIHFIRSLSENSFLKILEEVKDKNWGIVVISKSGTTLEPSVGFKLFREALYKQYGEQAQKRIVAITDPKKGVLHDIAVKNKYEMLPIYSDIGGRFSTITPSGLLVAGLVGADYKQLIEGAKKAKADLFASSELKKNSAYTYAALRHYLYTEMKKDVEIAITYEEQHEYLMLQHRQLFGESEGKSLNSLFPTYSVFTTDLHSMGQLYQDGKKIFFETVFSFEKANKNKLKLKNSEFNNDDQLDYLTKKSVNQLNYVACEATKQAHASAGVPIIEIDVKENSAYGFGYLYFWLCVATSVSALLLGHDPYNQPGVENYKQRMFKLL</sequence>